<dbReference type="EMBL" id="AY653733">
    <property type="protein sequence ID" value="AAV50541.1"/>
    <property type="molecule type" value="Genomic_DNA"/>
</dbReference>
<dbReference type="SMR" id="Q5UPV3"/>
<dbReference type="KEGG" id="vg:9924878"/>
<dbReference type="OrthoDB" id="37791at10239"/>
<dbReference type="Proteomes" id="UP000001134">
    <property type="component" value="Genome"/>
</dbReference>
<organism>
    <name type="scientific">Acanthamoeba polyphaga mimivirus</name>
    <name type="common">APMV</name>
    <dbReference type="NCBI Taxonomy" id="212035"/>
    <lineage>
        <taxon>Viruses</taxon>
        <taxon>Varidnaviria</taxon>
        <taxon>Bamfordvirae</taxon>
        <taxon>Nucleocytoviricota</taxon>
        <taxon>Megaviricetes</taxon>
        <taxon>Imitervirales</taxon>
        <taxon>Mimiviridae</taxon>
        <taxon>Megamimivirinae</taxon>
        <taxon>Mimivirus</taxon>
        <taxon>Mimivirus bradfordmassiliense</taxon>
    </lineage>
</organism>
<sequence>MENIEKKCQPETINEDNNDEKQYEPEIIEFTVNGFNYVVKFSKTCVPSIHITCTHVEEFYSWSFTTDKNIDNQIPTNTIENVAKQDIKIHPKMLFDMFCSFKNNSLEKMFELVFPKDFKTHETNLNIYIFTTIAYSKYVDHKYISLAQVEISEYDRFLLKSSKANKLFMEQTKKELNDMREINETLKNEINNTKNIFNESIKNLVENFECEYAKDKTIESIKTEEENFEDFEKLMKKFLANPKCMKYIIDAISNSNVFATKDEL</sequence>
<organismHost>
    <name type="scientific">Acanthamoeba polyphaga</name>
    <name type="common">Amoeba</name>
    <dbReference type="NCBI Taxonomy" id="5757"/>
</organismHost>
<protein>
    <recommendedName>
        <fullName>Uncharacterized protein L269</fullName>
    </recommendedName>
</protein>
<comment type="similarity">
    <text evidence="2">Belongs to the mimivirus R73/L269/L862 family.</text>
</comment>
<gene>
    <name type="ordered locus">MIMI_L269</name>
</gene>
<evidence type="ECO:0000256" key="1">
    <source>
        <dbReference type="SAM" id="MobiDB-lite"/>
    </source>
</evidence>
<evidence type="ECO:0000305" key="2"/>
<proteinExistence type="inferred from homology"/>
<feature type="chain" id="PRO_0000071258" description="Uncharacterized protein L269">
    <location>
        <begin position="1"/>
        <end position="264"/>
    </location>
</feature>
<feature type="region of interest" description="Disordered" evidence="1">
    <location>
        <begin position="1"/>
        <end position="20"/>
    </location>
</feature>
<accession>Q5UPV3</accession>
<reference key="1">
    <citation type="journal article" date="2004" name="Science">
        <title>The 1.2-megabase genome sequence of Mimivirus.</title>
        <authorList>
            <person name="Raoult D."/>
            <person name="Audic S."/>
            <person name="Robert C."/>
            <person name="Abergel C."/>
            <person name="Renesto P."/>
            <person name="Ogata H."/>
            <person name="La Scola B."/>
            <person name="Susan M."/>
            <person name="Claverie J.-M."/>
        </authorList>
    </citation>
    <scope>NUCLEOTIDE SEQUENCE [LARGE SCALE GENOMIC DNA]</scope>
    <source>
        <strain>Rowbotham-Bradford</strain>
    </source>
</reference>
<name>YL269_MIMIV</name>
<keyword id="KW-1185">Reference proteome</keyword>